<evidence type="ECO:0000250" key="1"/>
<evidence type="ECO:0000255" key="2">
    <source>
        <dbReference type="HAMAP-Rule" id="MF_00209"/>
    </source>
</evidence>
<name>IPYR_ECO57</name>
<gene>
    <name evidence="2" type="primary">ppa</name>
    <name type="ordered locus">Z5837</name>
    <name type="ordered locus">ECs5204</name>
</gene>
<accession>P0A7B0</accession>
<accession>P17288</accession>
<sequence length="176" mass="19704">MSLLNVPAGKDLPEDIYVVIEIPANADPIKYEIDKESGALFVDRFMSTAMFYPCNYGYINHTLSLDGDPVDVLVPTPYPLQPGSVIRCRPVGVLKMTDEAGEDAKLVAVPHSKLSKEYDHIKDVNDLPELLKAQIAHFFEHYKDLEKGKWVKVEGWENAEAAKAEIVASFERAKNK</sequence>
<dbReference type="EC" id="3.6.1.1" evidence="2"/>
<dbReference type="EMBL" id="AE005174">
    <property type="protein sequence ID" value="AAG59424.1"/>
    <property type="molecule type" value="Genomic_DNA"/>
</dbReference>
<dbReference type="EMBL" id="BA000007">
    <property type="protein sequence ID" value="BAB38627.1"/>
    <property type="molecule type" value="Genomic_DNA"/>
</dbReference>
<dbReference type="PIR" id="D86120">
    <property type="entry name" value="D86120"/>
</dbReference>
<dbReference type="PIR" id="D91279">
    <property type="entry name" value="D91279"/>
</dbReference>
<dbReference type="RefSeq" id="NP_313231.1">
    <property type="nucleotide sequence ID" value="NC_002695.1"/>
</dbReference>
<dbReference type="RefSeq" id="WP_000055075.1">
    <property type="nucleotide sequence ID" value="NZ_VOAI01000023.1"/>
</dbReference>
<dbReference type="SMR" id="P0A7B0"/>
<dbReference type="STRING" id="155864.Z5837"/>
<dbReference type="GeneID" id="913899"/>
<dbReference type="GeneID" id="93777598"/>
<dbReference type="KEGG" id="ece:Z5837"/>
<dbReference type="KEGG" id="ecs:ECs_5204"/>
<dbReference type="PATRIC" id="fig|386585.9.peg.5440"/>
<dbReference type="eggNOG" id="COG0221">
    <property type="taxonomic scope" value="Bacteria"/>
</dbReference>
<dbReference type="HOGENOM" id="CLU_073198_1_0_6"/>
<dbReference type="OMA" id="IHHVSEF"/>
<dbReference type="Proteomes" id="UP000000558">
    <property type="component" value="Chromosome"/>
</dbReference>
<dbReference type="Proteomes" id="UP000002519">
    <property type="component" value="Chromosome"/>
</dbReference>
<dbReference type="GO" id="GO:0005737">
    <property type="term" value="C:cytoplasm"/>
    <property type="evidence" value="ECO:0007669"/>
    <property type="project" value="UniProtKB-SubCell"/>
</dbReference>
<dbReference type="GO" id="GO:0004427">
    <property type="term" value="F:inorganic diphosphate phosphatase activity"/>
    <property type="evidence" value="ECO:0007669"/>
    <property type="project" value="UniProtKB-UniRule"/>
</dbReference>
<dbReference type="GO" id="GO:0000287">
    <property type="term" value="F:magnesium ion binding"/>
    <property type="evidence" value="ECO:0007669"/>
    <property type="project" value="UniProtKB-UniRule"/>
</dbReference>
<dbReference type="GO" id="GO:0006796">
    <property type="term" value="P:phosphate-containing compound metabolic process"/>
    <property type="evidence" value="ECO:0007669"/>
    <property type="project" value="InterPro"/>
</dbReference>
<dbReference type="CDD" id="cd00412">
    <property type="entry name" value="pyrophosphatase"/>
    <property type="match status" value="1"/>
</dbReference>
<dbReference type="FunFam" id="3.90.80.10:FF:000001">
    <property type="entry name" value="Inorganic pyrophosphatase"/>
    <property type="match status" value="1"/>
</dbReference>
<dbReference type="Gene3D" id="3.90.80.10">
    <property type="entry name" value="Inorganic pyrophosphatase"/>
    <property type="match status" value="1"/>
</dbReference>
<dbReference type="HAMAP" id="MF_00209">
    <property type="entry name" value="Inorganic_PPase"/>
    <property type="match status" value="1"/>
</dbReference>
<dbReference type="InterPro" id="IPR008162">
    <property type="entry name" value="Pyrophosphatase"/>
</dbReference>
<dbReference type="InterPro" id="IPR036649">
    <property type="entry name" value="Pyrophosphatase_sf"/>
</dbReference>
<dbReference type="NCBIfam" id="NF002317">
    <property type="entry name" value="PRK01250.1"/>
    <property type="match status" value="1"/>
</dbReference>
<dbReference type="PANTHER" id="PTHR10286">
    <property type="entry name" value="INORGANIC PYROPHOSPHATASE"/>
    <property type="match status" value="1"/>
</dbReference>
<dbReference type="Pfam" id="PF00719">
    <property type="entry name" value="Pyrophosphatase"/>
    <property type="match status" value="1"/>
</dbReference>
<dbReference type="SUPFAM" id="SSF50324">
    <property type="entry name" value="Inorganic pyrophosphatase"/>
    <property type="match status" value="1"/>
</dbReference>
<dbReference type="PROSITE" id="PS00387">
    <property type="entry name" value="PPASE"/>
    <property type="match status" value="1"/>
</dbReference>
<protein>
    <recommendedName>
        <fullName evidence="2">Inorganic pyrophosphatase</fullName>
        <ecNumber evidence="2">3.6.1.1</ecNumber>
    </recommendedName>
    <alternativeName>
        <fullName evidence="2">Pyrophosphate phospho-hydrolase</fullName>
        <shortName evidence="2">PPase</shortName>
    </alternativeName>
</protein>
<keyword id="KW-0963">Cytoplasm</keyword>
<keyword id="KW-0378">Hydrolase</keyword>
<keyword id="KW-0460">Magnesium</keyword>
<keyword id="KW-0479">Metal-binding</keyword>
<keyword id="KW-1185">Reference proteome</keyword>
<feature type="initiator methionine" description="Removed" evidence="1">
    <location>
        <position position="1"/>
    </location>
</feature>
<feature type="chain" id="PRO_0000137496" description="Inorganic pyrophosphatase">
    <location>
        <begin position="2"/>
        <end position="176"/>
    </location>
</feature>
<feature type="binding site" evidence="2">
    <location>
        <position position="30"/>
    </location>
    <ligand>
        <name>substrate</name>
    </ligand>
</feature>
<feature type="binding site" evidence="2">
    <location>
        <position position="44"/>
    </location>
    <ligand>
        <name>substrate</name>
    </ligand>
</feature>
<feature type="binding site" evidence="2">
    <location>
        <position position="56"/>
    </location>
    <ligand>
        <name>substrate</name>
    </ligand>
</feature>
<feature type="binding site" evidence="2">
    <location>
        <position position="66"/>
    </location>
    <ligand>
        <name>Mg(2+)</name>
        <dbReference type="ChEBI" id="CHEBI:18420"/>
        <label>1</label>
    </ligand>
</feature>
<feature type="binding site" evidence="2">
    <location>
        <position position="71"/>
    </location>
    <ligand>
        <name>Mg(2+)</name>
        <dbReference type="ChEBI" id="CHEBI:18420"/>
        <label>1</label>
    </ligand>
</feature>
<feature type="binding site" evidence="2">
    <location>
        <position position="71"/>
    </location>
    <ligand>
        <name>Mg(2+)</name>
        <dbReference type="ChEBI" id="CHEBI:18420"/>
        <label>2</label>
    </ligand>
</feature>
<feature type="binding site" evidence="2">
    <location>
        <position position="103"/>
    </location>
    <ligand>
        <name>Mg(2+)</name>
        <dbReference type="ChEBI" id="CHEBI:18420"/>
        <label>1</label>
    </ligand>
</feature>
<feature type="binding site" evidence="2">
    <location>
        <position position="142"/>
    </location>
    <ligand>
        <name>substrate</name>
    </ligand>
</feature>
<proteinExistence type="inferred from homology"/>
<comment type="function">
    <text evidence="2">Catalyzes the hydrolysis of inorganic pyrophosphate (PPi) forming two phosphate ions.</text>
</comment>
<comment type="catalytic activity">
    <reaction evidence="2">
        <text>diphosphate + H2O = 2 phosphate + H(+)</text>
        <dbReference type="Rhea" id="RHEA:24576"/>
        <dbReference type="ChEBI" id="CHEBI:15377"/>
        <dbReference type="ChEBI" id="CHEBI:15378"/>
        <dbReference type="ChEBI" id="CHEBI:33019"/>
        <dbReference type="ChEBI" id="CHEBI:43474"/>
        <dbReference type="EC" id="3.6.1.1"/>
    </reaction>
</comment>
<comment type="cofactor">
    <cofactor evidence="2">
        <name>Mg(2+)</name>
        <dbReference type="ChEBI" id="CHEBI:18420"/>
    </cofactor>
</comment>
<comment type="subunit">
    <text evidence="2">Homohexamer.</text>
</comment>
<comment type="subcellular location">
    <subcellularLocation>
        <location evidence="2">Cytoplasm</location>
    </subcellularLocation>
</comment>
<comment type="similarity">
    <text evidence="2">Belongs to the PPase family.</text>
</comment>
<reference key="1">
    <citation type="journal article" date="2001" name="Nature">
        <title>Genome sequence of enterohaemorrhagic Escherichia coli O157:H7.</title>
        <authorList>
            <person name="Perna N.T."/>
            <person name="Plunkett G. III"/>
            <person name="Burland V."/>
            <person name="Mau B."/>
            <person name="Glasner J.D."/>
            <person name="Rose D.J."/>
            <person name="Mayhew G.F."/>
            <person name="Evans P.S."/>
            <person name="Gregor J."/>
            <person name="Kirkpatrick H.A."/>
            <person name="Posfai G."/>
            <person name="Hackett J."/>
            <person name="Klink S."/>
            <person name="Boutin A."/>
            <person name="Shao Y."/>
            <person name="Miller L."/>
            <person name="Grotbeck E.J."/>
            <person name="Davis N.W."/>
            <person name="Lim A."/>
            <person name="Dimalanta E.T."/>
            <person name="Potamousis K."/>
            <person name="Apodaca J."/>
            <person name="Anantharaman T.S."/>
            <person name="Lin J."/>
            <person name="Yen G."/>
            <person name="Schwartz D.C."/>
            <person name="Welch R.A."/>
            <person name="Blattner F.R."/>
        </authorList>
    </citation>
    <scope>NUCLEOTIDE SEQUENCE [LARGE SCALE GENOMIC DNA]</scope>
    <source>
        <strain>O157:H7 / EDL933 / ATCC 700927 / EHEC</strain>
    </source>
</reference>
<reference key="2">
    <citation type="journal article" date="2001" name="DNA Res.">
        <title>Complete genome sequence of enterohemorrhagic Escherichia coli O157:H7 and genomic comparison with a laboratory strain K-12.</title>
        <authorList>
            <person name="Hayashi T."/>
            <person name="Makino K."/>
            <person name="Ohnishi M."/>
            <person name="Kurokawa K."/>
            <person name="Ishii K."/>
            <person name="Yokoyama K."/>
            <person name="Han C.-G."/>
            <person name="Ohtsubo E."/>
            <person name="Nakayama K."/>
            <person name="Murata T."/>
            <person name="Tanaka M."/>
            <person name="Tobe T."/>
            <person name="Iida T."/>
            <person name="Takami H."/>
            <person name="Honda T."/>
            <person name="Sasakawa C."/>
            <person name="Ogasawara N."/>
            <person name="Yasunaga T."/>
            <person name="Kuhara S."/>
            <person name="Shiba T."/>
            <person name="Hattori M."/>
            <person name="Shinagawa H."/>
        </authorList>
    </citation>
    <scope>NUCLEOTIDE SEQUENCE [LARGE SCALE GENOMIC DNA]</scope>
    <source>
        <strain>O157:H7 / Sakai / RIMD 0509952 / EHEC</strain>
    </source>
</reference>
<organism>
    <name type="scientific">Escherichia coli O157:H7</name>
    <dbReference type="NCBI Taxonomy" id="83334"/>
    <lineage>
        <taxon>Bacteria</taxon>
        <taxon>Pseudomonadati</taxon>
        <taxon>Pseudomonadota</taxon>
        <taxon>Gammaproteobacteria</taxon>
        <taxon>Enterobacterales</taxon>
        <taxon>Enterobacteriaceae</taxon>
        <taxon>Escherichia</taxon>
    </lineage>
</organism>